<sequence>IDYRKCQASQILKEHGMDKVIPLPELVCTMFHISGLSPQAEV</sequence>
<dbReference type="PIR" id="A10265">
    <property type="entry name" value="A10265"/>
</dbReference>
<dbReference type="SMR" id="P19122"/>
<dbReference type="GO" id="GO:0005576">
    <property type="term" value="C:extracellular region"/>
    <property type="evidence" value="ECO:0007669"/>
    <property type="project" value="UniProtKB-SubCell"/>
</dbReference>
<dbReference type="GO" id="GO:0005989">
    <property type="term" value="P:lactose biosynthetic process"/>
    <property type="evidence" value="ECO:0007669"/>
    <property type="project" value="UniProtKB-KW"/>
</dbReference>
<dbReference type="InterPro" id="IPR001916">
    <property type="entry name" value="Glyco_hydro_22"/>
</dbReference>
<dbReference type="InterPro" id="IPR023346">
    <property type="entry name" value="Lysozyme-like_dom_sf"/>
</dbReference>
<dbReference type="SUPFAM" id="SSF53955">
    <property type="entry name" value="Lysozyme-like"/>
    <property type="match status" value="1"/>
</dbReference>
<dbReference type="PROSITE" id="PS51348">
    <property type="entry name" value="GLYCOSYL_HYDROL_F22_2"/>
    <property type="match status" value="1"/>
</dbReference>
<name>LALBA_MACGI</name>
<reference key="1">
    <citation type="journal article" date="1973" name="J. Biol. Chem.">
        <title>A partial amino acid sequence of alpha-lactalbumin-I of the grey kangaroo (Macropus giganteus).</title>
        <authorList>
            <person name="Brew K."/>
            <person name="Steinman H.M."/>
            <person name="Hill R.L."/>
        </authorList>
    </citation>
    <scope>PROTEIN SEQUENCE</scope>
</reference>
<keyword id="KW-0106">Calcium</keyword>
<keyword id="KW-0903">Direct protein sequencing</keyword>
<keyword id="KW-0422">Lactose biosynthesis</keyword>
<keyword id="KW-0494">Milk protein</keyword>
<keyword id="KW-0964">Secreted</keyword>
<proteinExistence type="evidence at protein level"/>
<evidence type="ECO:0000255" key="1">
    <source>
        <dbReference type="PROSITE-ProRule" id="PRU00680"/>
    </source>
</evidence>
<comment type="function">
    <text>Regulatory subunit of lactose synthase, changes the substrate specificity of galactosyltransferase in the mammary gland making glucose a good acceptor substrate for this enzyme. This enables LS to synthesize lactose, the major carbohydrate component of milk. In other tissues, galactosyltransferase transfers galactose onto the N-acetylglucosamine of the oligosaccharide chains in glycoproteins.</text>
</comment>
<comment type="subunit">
    <text>Lactose synthase (LS) is a heterodimer of a catalytic component, beta1,4-galactosyltransferase (beta4Gal-T1) and a regulatory component, alpha-lactalbumin (LA).</text>
</comment>
<comment type="subcellular location">
    <subcellularLocation>
        <location>Secreted</location>
    </subcellularLocation>
</comment>
<comment type="tissue specificity">
    <text>Mammary gland specific. Secreted in milk.</text>
</comment>
<comment type="similarity">
    <text evidence="1">Belongs to the glycosyl hydrolase 22 family.</text>
</comment>
<organism>
    <name type="scientific">Macropus giganteus</name>
    <name type="common">Eastern gray kangaroo</name>
    <dbReference type="NCBI Taxonomy" id="9317"/>
    <lineage>
        <taxon>Eukaryota</taxon>
        <taxon>Metazoa</taxon>
        <taxon>Chordata</taxon>
        <taxon>Craniata</taxon>
        <taxon>Vertebrata</taxon>
        <taxon>Euteleostomi</taxon>
        <taxon>Mammalia</taxon>
        <taxon>Metatheria</taxon>
        <taxon>Diprotodontia</taxon>
        <taxon>Macropodidae</taxon>
        <taxon>Macropus</taxon>
    </lineage>
</organism>
<protein>
    <recommendedName>
        <fullName>Alpha-lactalbumin I</fullName>
    </recommendedName>
    <alternativeName>
        <fullName>Lactose synthase B protein</fullName>
    </alternativeName>
</protein>
<feature type="chain" id="PRO_0000208838" description="Alpha-lactalbumin I">
    <location>
        <begin position="1"/>
        <end position="42" status="greater than"/>
    </location>
</feature>
<feature type="domain" description="C-type lysozyme" evidence="1">
    <location>
        <begin position="1"/>
        <end position="42" status="greater than"/>
    </location>
</feature>
<feature type="non-terminal residue">
    <location>
        <position position="42"/>
    </location>
</feature>
<gene>
    <name type="primary">LALBA</name>
</gene>
<accession>P19122</accession>